<accession>I1S2J9</accession>
<accession>A0A098E169</accession>
<feature type="chain" id="PRO_0000449946" description="ABC transporter FGM5">
    <location>
        <begin position="1"/>
        <end position="1472"/>
    </location>
</feature>
<feature type="transmembrane region" description="Helical" evidence="1">
    <location>
        <begin position="32"/>
        <end position="52"/>
    </location>
</feature>
<feature type="transmembrane region" description="Helical" evidence="1">
    <location>
        <begin position="67"/>
        <end position="87"/>
    </location>
</feature>
<feature type="transmembrane region" description="Helical" evidence="1">
    <location>
        <begin position="100"/>
        <end position="120"/>
    </location>
</feature>
<feature type="transmembrane region" description="Helical" evidence="1">
    <location>
        <begin position="163"/>
        <end position="183"/>
    </location>
</feature>
<feature type="transmembrane region" description="Helical" evidence="1">
    <location>
        <begin position="197"/>
        <end position="217"/>
    </location>
</feature>
<feature type="transmembrane region" description="Helical" evidence="1">
    <location>
        <begin position="271"/>
        <end position="291"/>
    </location>
</feature>
<feature type="transmembrane region" description="Helical" evidence="1 3">
    <location>
        <begin position="316"/>
        <end position="336"/>
    </location>
</feature>
<feature type="transmembrane region" description="Helical" evidence="1 3">
    <location>
        <begin position="386"/>
        <end position="406"/>
    </location>
</feature>
<feature type="transmembrane region" description="Helical" evidence="1 3">
    <location>
        <begin position="412"/>
        <end position="432"/>
    </location>
</feature>
<feature type="transmembrane region" description="Helical" evidence="1 3">
    <location>
        <begin position="493"/>
        <end position="513"/>
    </location>
</feature>
<feature type="transmembrane region" description="Helical" evidence="1 3">
    <location>
        <begin position="534"/>
        <end position="554"/>
    </location>
</feature>
<feature type="transmembrane region" description="Helical" evidence="1 3">
    <location>
        <begin position="900"/>
        <end position="920"/>
    </location>
</feature>
<feature type="transmembrane region" description="Helical" evidence="1 3">
    <location>
        <begin position="938"/>
        <end position="958"/>
    </location>
</feature>
<feature type="transmembrane region" description="Helical" evidence="1 3">
    <location>
        <begin position="1003"/>
        <end position="1023"/>
    </location>
</feature>
<feature type="transmembrane region" description="Helical" evidence="1 3">
    <location>
        <begin position="1024"/>
        <end position="1044"/>
    </location>
</feature>
<feature type="transmembrane region" description="Helical" evidence="1 3">
    <location>
        <begin position="1116"/>
        <end position="1136"/>
    </location>
</feature>
<feature type="domain" description="ABC transmembrane type-1 1" evidence="3">
    <location>
        <begin position="284"/>
        <end position="551"/>
    </location>
</feature>
<feature type="domain" description="ABC transporter 1" evidence="2">
    <location>
        <begin position="605"/>
        <end position="834"/>
    </location>
</feature>
<feature type="domain" description="ABC transmembrane type-1 2" evidence="3">
    <location>
        <begin position="900"/>
        <end position="1139"/>
    </location>
</feature>
<feature type="domain" description="ABC transporter 2" evidence="2">
    <location>
        <begin position="1218"/>
        <end position="1468"/>
    </location>
</feature>
<feature type="binding site" evidence="2">
    <location>
        <begin position="638"/>
        <end position="645"/>
    </location>
    <ligand>
        <name>ATP</name>
        <dbReference type="ChEBI" id="CHEBI:30616"/>
    </ligand>
</feature>
<feature type="binding site" evidence="2">
    <location>
        <begin position="1255"/>
        <end position="1262"/>
    </location>
    <ligand>
        <name>ATP</name>
        <dbReference type="ChEBI" id="CHEBI:30616"/>
    </ligand>
</feature>
<feature type="glycosylation site" description="N-linked (GlcNAc...) asparagine" evidence="4">
    <location>
        <position position="682"/>
    </location>
</feature>
<feature type="glycosylation site" description="N-linked (GlcNAc...) asparagine" evidence="4">
    <location>
        <position position="696"/>
    </location>
</feature>
<feature type="glycosylation site" description="N-linked (GlcNAc...) asparagine" evidence="4">
    <location>
        <position position="763"/>
    </location>
</feature>
<feature type="glycosylation site" description="N-linked (GlcNAc...) asparagine" evidence="4">
    <location>
        <position position="784"/>
    </location>
</feature>
<feature type="glycosylation site" description="N-linked (GlcNAc...) asparagine" evidence="4">
    <location>
        <position position="843"/>
    </location>
</feature>
<feature type="glycosylation site" description="N-linked (GlcNAc...) asparagine" evidence="4">
    <location>
        <position position="1101"/>
    </location>
</feature>
<feature type="glycosylation site" description="N-linked (GlcNAc...) asparagine" evidence="4">
    <location>
        <position position="1277"/>
    </location>
</feature>
<feature type="glycosylation site" description="N-linked (GlcNAc...) asparagine" evidence="4">
    <location>
        <position position="1293"/>
    </location>
</feature>
<keyword id="KW-0067">ATP-binding</keyword>
<keyword id="KW-1003">Cell membrane</keyword>
<keyword id="KW-0325">Glycoprotein</keyword>
<keyword id="KW-0378">Hydrolase</keyword>
<keyword id="KW-0472">Membrane</keyword>
<keyword id="KW-0547">Nucleotide-binding</keyword>
<keyword id="KW-0597">Phosphoprotein</keyword>
<keyword id="KW-1185">Reference proteome</keyword>
<keyword id="KW-0677">Repeat</keyword>
<keyword id="KW-0812">Transmembrane</keyword>
<keyword id="KW-1133">Transmembrane helix</keyword>
<keyword id="KW-0813">Transport</keyword>
<gene>
    <name evidence="10" type="primary">FGM5</name>
    <name type="ORF">FG10995</name>
</gene>
<protein>
    <recommendedName>
        <fullName evidence="10">ABC transporter FGM5</fullName>
    </recommendedName>
    <alternativeName>
        <fullName evidence="9">C64 cluster protein NRPS5</fullName>
    </alternativeName>
    <alternativeName>
        <fullName evidence="10">Fg3_54 cluster protein FGM5</fullName>
    </alternativeName>
    <alternativeName>
        <fullName evidence="10">Fusaoctaxin A biosynthesis cluster protein FGM5</fullName>
    </alternativeName>
</protein>
<evidence type="ECO:0000255" key="1"/>
<evidence type="ECO:0000255" key="2">
    <source>
        <dbReference type="PROSITE-ProRule" id="PRU00434"/>
    </source>
</evidence>
<evidence type="ECO:0000255" key="3">
    <source>
        <dbReference type="PROSITE-ProRule" id="PRU00441"/>
    </source>
</evidence>
<evidence type="ECO:0000255" key="4">
    <source>
        <dbReference type="PROSITE-ProRule" id="PRU00498"/>
    </source>
</evidence>
<evidence type="ECO:0000269" key="5">
    <source>
    </source>
</evidence>
<evidence type="ECO:0000269" key="6">
    <source>
    </source>
</evidence>
<evidence type="ECO:0000269" key="7">
    <source>
    </source>
</evidence>
<evidence type="ECO:0000269" key="8">
    <source>
    </source>
</evidence>
<evidence type="ECO:0000303" key="9">
    <source>
    </source>
</evidence>
<evidence type="ECO:0000303" key="10">
    <source>
    </source>
</evidence>
<evidence type="ECO:0000305" key="11"/>
<evidence type="ECO:0000305" key="12">
    <source>
    </source>
</evidence>
<sequence>MAVSGCTNDNSFGPIVQGCRGDFDFTLRFQNIILGILPAAIFILLALTRVATLAFRSRIVGGKVLQFTKLAVIAATAALQLVLLILSSTSNDESVDGDTFAVANSALGFSQWIVTLALSFAEHSRAPRPSSILTLYLLLQILLDVTRCRSYWLLATSFQITRYAGVFTATIGLKVITLLLELQNKARWMTWRKEDHSPEETSSLFNLGVYFWLIGIFRNGFKKTLSIKDDLYLLDHEMQSKILLDRLTISFAKSSANVGKRFRLAKALGRALIVPLILPVVPRIAMIGFQYAQPFFIHALLEYLIHKDVPKNDGYGLIGAALIIYAGIAISDALFWYFHQRCLYMARGCLASYVYRSTTQGKMTDIGDAAVLTLMSTDVERIIYGFHGLHDFWANIIEIGLGCFLLQRQLGLAFISPIVVILLCVAATTAIAWAIGERQSRWMAKIESRVGLTSSIISNIKSLRISGITAPVRDLVQKMREQELSIGNKFRWLLIMTATVAFVPSAMSPVVAFAFTNEQLDTLKIFVSFSFITLLTNPLGAMFQSVPAVIAAFVCLERIQKFLEIEPRVDYRKSSRPLSPADGSLLEQDDEKPLGLGQGASKSLISIVDGSFGWTSEKMTLTGISVDVPVGKLTLVVGPVASGKSTFCKALLGEVPFSSGEVIVPSTEAPIGYCEQTPFLKNGSIRDNIIWHSVYNQTRYEEVLDACLLRTDLDILPEGDATTIGSNGIMLSGGQKQRVSLARALYLETDFLLIDDILSGLDNSTGNDVFRRVFGPNGLMRRRNATAILCTHAIRYLPLADHIIILATDGTVGEQGSFDKLAETGIYIPTLGLSDADDASSTNSSIPVEETVAATMPVPLTAFSTVSIGHLEAESRSTGDAKVYRHYYQSVNGWATMTCLLSGIMYAVGRNFPSIWMGWWGSNSFDRTSSFYIGIMGLFRGLQIISLFLCATAVVIFMTTQSGKLLHNEILNTLVNAPLRFFTTTDFGAVTNLFSQDMTLIDGELPISLLNTVIQIFDVFAMAVVVAVGAPWLAIAYPVVFSIIYMLQMFYLRTSRQLRLLDLEAKSPLYAHFLDTIRGIATVRAQKLRDQEILFNQDLLNLSQRPAYLLAMAQRFLATFLNLIVMVLAVGVVAISTQLRTNSGFAGSSLVTLMSWGESISSLIQYYTQVEVSIGAVSRLKAFAQNVPSENLDQEDLEPAEEWPTQGDIAIRGVSASYKNDDESPASEDDEESPNLALEDLTILVKPGQKVALCGRTGSGKSSIILLLLRLLDPLSNQSENIVIDGVPYNRVNRSILRRRLIAVPQDPVFLPDGSSIKENLDPFNVASDEECLAVLEDVRLTKFATDHGSIHAGIRADELSAGQKQLFSLGRAVLRRRVKQRLFSIHGGVLLLDEVSSSVDSATDNLVQEIIKEEFADYTIVMVSHRLNIVMEYFDSVVVLDRGRVVETGDPRDLAKTEGSWFSQLWAMEKK</sequence>
<dbReference type="EMBL" id="HG970334">
    <property type="status" value="NOT_ANNOTATED_CDS"/>
    <property type="molecule type" value="Genomic_DNA"/>
</dbReference>
<dbReference type="RefSeq" id="XP_011325375.1">
    <property type="nucleotide sequence ID" value="XM_011327073.1"/>
</dbReference>
<dbReference type="SMR" id="I1S2J9"/>
<dbReference type="GlyCosmos" id="I1S2J9">
    <property type="glycosylation" value="8 sites, No reported glycans"/>
</dbReference>
<dbReference type="KEGG" id="fgr:FGSG_10995"/>
<dbReference type="HOGENOM" id="CLU_000604_27_5_1"/>
<dbReference type="InParanoid" id="I1S2J9"/>
<dbReference type="OrthoDB" id="100327at110618"/>
<dbReference type="PHI-base" id="PHI:3924"/>
<dbReference type="PHI-base" id="PHI:8224"/>
<dbReference type="PHI-base" id="PHI:9036"/>
<dbReference type="Proteomes" id="UP000070720">
    <property type="component" value="Chromosome 3"/>
</dbReference>
<dbReference type="GO" id="GO:0005886">
    <property type="term" value="C:plasma membrane"/>
    <property type="evidence" value="ECO:0007669"/>
    <property type="project" value="UniProtKB-SubCell"/>
</dbReference>
<dbReference type="GO" id="GO:0140359">
    <property type="term" value="F:ABC-type transporter activity"/>
    <property type="evidence" value="ECO:0007669"/>
    <property type="project" value="InterPro"/>
</dbReference>
<dbReference type="GO" id="GO:0005524">
    <property type="term" value="F:ATP binding"/>
    <property type="evidence" value="ECO:0007669"/>
    <property type="project" value="UniProtKB-KW"/>
</dbReference>
<dbReference type="GO" id="GO:0016887">
    <property type="term" value="F:ATP hydrolysis activity"/>
    <property type="evidence" value="ECO:0007669"/>
    <property type="project" value="InterPro"/>
</dbReference>
<dbReference type="CDD" id="cd18579">
    <property type="entry name" value="ABC_6TM_ABCC_D1"/>
    <property type="match status" value="1"/>
</dbReference>
<dbReference type="CDD" id="cd18580">
    <property type="entry name" value="ABC_6TM_ABCC_D2"/>
    <property type="match status" value="1"/>
</dbReference>
<dbReference type="CDD" id="cd03250">
    <property type="entry name" value="ABCC_MRP_domain1"/>
    <property type="match status" value="1"/>
</dbReference>
<dbReference type="FunFam" id="1.20.1560.10:FF:000055">
    <property type="entry name" value="ABC multidrug transporter (Eurofung)"/>
    <property type="match status" value="1"/>
</dbReference>
<dbReference type="FunFam" id="1.20.1560.10:FF:000066">
    <property type="entry name" value="ABC multidrug transporter (Eurofung)"/>
    <property type="match status" value="1"/>
</dbReference>
<dbReference type="Gene3D" id="1.20.1560.10">
    <property type="entry name" value="ABC transporter type 1, transmembrane domain"/>
    <property type="match status" value="2"/>
</dbReference>
<dbReference type="Gene3D" id="3.40.50.300">
    <property type="entry name" value="P-loop containing nucleotide triphosphate hydrolases"/>
    <property type="match status" value="2"/>
</dbReference>
<dbReference type="InterPro" id="IPR003593">
    <property type="entry name" value="AAA+_ATPase"/>
</dbReference>
<dbReference type="InterPro" id="IPR011527">
    <property type="entry name" value="ABC1_TM_dom"/>
</dbReference>
<dbReference type="InterPro" id="IPR036640">
    <property type="entry name" value="ABC1_TM_sf"/>
</dbReference>
<dbReference type="InterPro" id="IPR003439">
    <property type="entry name" value="ABC_transporter-like_ATP-bd"/>
</dbReference>
<dbReference type="InterPro" id="IPR017871">
    <property type="entry name" value="ABC_transporter-like_CS"/>
</dbReference>
<dbReference type="InterPro" id="IPR050173">
    <property type="entry name" value="ABC_transporter_C-like"/>
</dbReference>
<dbReference type="InterPro" id="IPR044746">
    <property type="entry name" value="ABCC_6TM_D1"/>
</dbReference>
<dbReference type="InterPro" id="IPR044726">
    <property type="entry name" value="ABCC_6TM_D2"/>
</dbReference>
<dbReference type="InterPro" id="IPR027417">
    <property type="entry name" value="P-loop_NTPase"/>
</dbReference>
<dbReference type="InterPro" id="IPR056227">
    <property type="entry name" value="TMD0_ABC"/>
</dbReference>
<dbReference type="PANTHER" id="PTHR24223:SF345">
    <property type="entry name" value="ABC MULTIDRUG TRANSPORTER (EUROFUNG)"/>
    <property type="match status" value="1"/>
</dbReference>
<dbReference type="PANTHER" id="PTHR24223">
    <property type="entry name" value="ATP-BINDING CASSETTE SUB-FAMILY C"/>
    <property type="match status" value="1"/>
</dbReference>
<dbReference type="Pfam" id="PF00664">
    <property type="entry name" value="ABC_membrane"/>
    <property type="match status" value="1"/>
</dbReference>
<dbReference type="Pfam" id="PF00005">
    <property type="entry name" value="ABC_tran"/>
    <property type="match status" value="2"/>
</dbReference>
<dbReference type="Pfam" id="PF24357">
    <property type="entry name" value="TMD0_ABC"/>
    <property type="match status" value="1"/>
</dbReference>
<dbReference type="SMART" id="SM00382">
    <property type="entry name" value="AAA"/>
    <property type="match status" value="2"/>
</dbReference>
<dbReference type="SUPFAM" id="SSF90123">
    <property type="entry name" value="ABC transporter transmembrane region"/>
    <property type="match status" value="2"/>
</dbReference>
<dbReference type="SUPFAM" id="SSF52540">
    <property type="entry name" value="P-loop containing nucleoside triphosphate hydrolases"/>
    <property type="match status" value="2"/>
</dbReference>
<dbReference type="PROSITE" id="PS50929">
    <property type="entry name" value="ABC_TM1F"/>
    <property type="match status" value="2"/>
</dbReference>
<dbReference type="PROSITE" id="PS00211">
    <property type="entry name" value="ABC_TRANSPORTER_1"/>
    <property type="match status" value="2"/>
</dbReference>
<dbReference type="PROSITE" id="PS50893">
    <property type="entry name" value="ABC_TRANSPORTER_2"/>
    <property type="match status" value="2"/>
</dbReference>
<comment type="function">
    <text evidence="7 8 12">ABC transporter; part of the Fg3_54/C64 gene cluster that mediates the biosynthesis of the octapeptide fusaoctaxin A, a virulence factor that is required for cell-to-cell invasiveness of plant host (PubMed:30804501). The 2 nonribosomal peptide synthetases NRPS9 and NRPS5 form an assembly line which likely utilizes GABA as a starter unit (loaded on the unique module M1 of NRPS9) and sequentially incorporates seven extender units composed of the residues L-Ala, L-allo-Ile, L-Ser, L-Val, L-Ser, L-Leu and L-Leu, respectively (PubMed:30804501, PubMed:31100892). During the process, each of the residues that are tethered on modules M3-M7 of NRPS5 containing an E domain can undergo an epimerization reaction to produce a D-configuration before the transpeptidation reaction occurs (PubMed:30804501, PubMed:31100892). The elongation of the peptidyl chain might be terminated by module M8-mediated L-Leu incorporation, followed by R domain-catalyzed 4 electron reduction to release the resulting octapeptide from the assembly line as an alcohol (PubMed:30804501, PubMed:31100892). Fusaoctaxin A is cleaved by the cluster specific ABC transporter FGM5 to the pentapeptide fusapentaxin A and the tripeptide fusatrixin A (PubMed:31100892). The other enzymes from the cluster, FGM1, FGM2, FGM3 and FGM9 seem not to be involved in the biosynthesis of fusaoctaxin A and their functions have still to be determined (Probable).</text>
</comment>
<comment type="pathway">
    <text evidence="8">Secondary metabolite biosynthesis.</text>
</comment>
<comment type="subcellular location">
    <subcellularLocation>
        <location evidence="11">Cell membrane</location>
        <topology evidence="1">Multi-pass membrane protein</topology>
    </subcellularLocation>
</comment>
<comment type="induction">
    <text evidence="5 6 8">Expression is positively regulated by the cluster-specific transcription factor FGM4 and is induced during infection of coleoptiles of wheat seedlings (PubMed:23266949, PubMed:25333987). The fusaoctaxin A gene cluster is silenced by H3K27 trimethylation by the histone methyltransferase KMT6 (PubMed:31100892).</text>
</comment>
<comment type="disruption phenotype">
    <text evidence="5 7 8">Leads to reduced virulence (PubMed:23266949, PubMed:30804501). Results in a substantial increase of fusaoctaxin A, and abolishes the production of fusapentaxin A and fusatrixin A (PubMed:31100892).</text>
</comment>
<comment type="similarity">
    <text evidence="11">Belongs to the ABC transporter superfamily. ABCC family. Conjugate transporter (TC 3.A.1.208) subfamily.</text>
</comment>
<organism>
    <name type="scientific">Gibberella zeae (strain ATCC MYA-4620 / CBS 123657 / FGSC 9075 / NRRL 31084 / PH-1)</name>
    <name type="common">Wheat head blight fungus</name>
    <name type="synonym">Fusarium graminearum</name>
    <dbReference type="NCBI Taxonomy" id="229533"/>
    <lineage>
        <taxon>Eukaryota</taxon>
        <taxon>Fungi</taxon>
        <taxon>Dikarya</taxon>
        <taxon>Ascomycota</taxon>
        <taxon>Pezizomycotina</taxon>
        <taxon>Sordariomycetes</taxon>
        <taxon>Hypocreomycetidae</taxon>
        <taxon>Hypocreales</taxon>
        <taxon>Nectriaceae</taxon>
        <taxon>Fusarium</taxon>
    </lineage>
</organism>
<proteinExistence type="evidence at protein level"/>
<name>FGM5_GIBZE</name>
<reference key="1">
    <citation type="journal article" date="2007" name="Science">
        <title>The Fusarium graminearum genome reveals a link between localized polymorphism and pathogen specialization.</title>
        <authorList>
            <person name="Cuomo C.A."/>
            <person name="Gueldener U."/>
            <person name="Xu J.-R."/>
            <person name="Trail F."/>
            <person name="Turgeon B.G."/>
            <person name="Di Pietro A."/>
            <person name="Walton J.D."/>
            <person name="Ma L.-J."/>
            <person name="Baker S.E."/>
            <person name="Rep M."/>
            <person name="Adam G."/>
            <person name="Antoniw J."/>
            <person name="Baldwin T."/>
            <person name="Calvo S.E."/>
            <person name="Chang Y.-L."/>
            <person name="DeCaprio D."/>
            <person name="Gale L.R."/>
            <person name="Gnerre S."/>
            <person name="Goswami R.S."/>
            <person name="Hammond-Kosack K."/>
            <person name="Harris L.J."/>
            <person name="Hilburn K."/>
            <person name="Kennell J.C."/>
            <person name="Kroken S."/>
            <person name="Magnuson J.K."/>
            <person name="Mannhaupt G."/>
            <person name="Mauceli E.W."/>
            <person name="Mewes H.-W."/>
            <person name="Mitterbauer R."/>
            <person name="Muehlbauer G."/>
            <person name="Muensterkoetter M."/>
            <person name="Nelson D."/>
            <person name="O'Donnell K."/>
            <person name="Ouellet T."/>
            <person name="Qi W."/>
            <person name="Quesneville H."/>
            <person name="Roncero M.I.G."/>
            <person name="Seong K.-Y."/>
            <person name="Tetko I.V."/>
            <person name="Urban M."/>
            <person name="Waalwijk C."/>
            <person name="Ward T.J."/>
            <person name="Yao J."/>
            <person name="Birren B.W."/>
            <person name="Kistler H.C."/>
        </authorList>
    </citation>
    <scope>NUCLEOTIDE SEQUENCE [LARGE SCALE GENOMIC DNA]</scope>
    <source>
        <strain>ATCC MYA-4620 / CBS 123657 / FGSC 9075 / NRRL 31084 / PH-1</strain>
    </source>
</reference>
<reference key="2">
    <citation type="journal article" date="2010" name="Nature">
        <title>Comparative genomics reveals mobile pathogenicity chromosomes in Fusarium.</title>
        <authorList>
            <person name="Ma L.-J."/>
            <person name="van der Does H.C."/>
            <person name="Borkovich K.A."/>
            <person name="Coleman J.J."/>
            <person name="Daboussi M.-J."/>
            <person name="Di Pietro A."/>
            <person name="Dufresne M."/>
            <person name="Freitag M."/>
            <person name="Grabherr M."/>
            <person name="Henrissat B."/>
            <person name="Houterman P.M."/>
            <person name="Kang S."/>
            <person name="Shim W.-B."/>
            <person name="Woloshuk C."/>
            <person name="Xie X."/>
            <person name="Xu J.-R."/>
            <person name="Antoniw J."/>
            <person name="Baker S.E."/>
            <person name="Bluhm B.H."/>
            <person name="Breakspear A."/>
            <person name="Brown D.W."/>
            <person name="Butchko R.A.E."/>
            <person name="Chapman S."/>
            <person name="Coulson R."/>
            <person name="Coutinho P.M."/>
            <person name="Danchin E.G.J."/>
            <person name="Diener A."/>
            <person name="Gale L.R."/>
            <person name="Gardiner D.M."/>
            <person name="Goff S."/>
            <person name="Hammond-Kosack K.E."/>
            <person name="Hilburn K."/>
            <person name="Hua-Van A."/>
            <person name="Jonkers W."/>
            <person name="Kazan K."/>
            <person name="Kodira C.D."/>
            <person name="Koehrsen M."/>
            <person name="Kumar L."/>
            <person name="Lee Y.-H."/>
            <person name="Li L."/>
            <person name="Manners J.M."/>
            <person name="Miranda-Saavedra D."/>
            <person name="Mukherjee M."/>
            <person name="Park G."/>
            <person name="Park J."/>
            <person name="Park S.-Y."/>
            <person name="Proctor R.H."/>
            <person name="Regev A."/>
            <person name="Ruiz-Roldan M.C."/>
            <person name="Sain D."/>
            <person name="Sakthikumar S."/>
            <person name="Sykes S."/>
            <person name="Schwartz D.C."/>
            <person name="Turgeon B.G."/>
            <person name="Wapinski I."/>
            <person name="Yoder O."/>
            <person name="Young S."/>
            <person name="Zeng Q."/>
            <person name="Zhou S."/>
            <person name="Galagan J."/>
            <person name="Cuomo C.A."/>
            <person name="Kistler H.C."/>
            <person name="Rep M."/>
        </authorList>
    </citation>
    <scope>GENOME REANNOTATION</scope>
    <source>
        <strain>ATCC MYA-4620 / CBS 123657 / FGSC 9075 / NRRL 31084 / PH-1</strain>
    </source>
</reference>
<reference key="3">
    <citation type="journal article" date="2015" name="BMC Genomics">
        <title>The completed genome sequence of the pathogenic ascomycete fungus Fusarium graminearum.</title>
        <authorList>
            <person name="King R."/>
            <person name="Urban M."/>
            <person name="Hammond-Kosack M.C.U."/>
            <person name="Hassani-Pak K."/>
            <person name="Hammond-Kosack K.E."/>
        </authorList>
    </citation>
    <scope>NUCLEOTIDE SEQUENCE [LARGE SCALE GENOMIC DNA]</scope>
    <source>
        <strain>ATCC MYA-4620 / CBS 123657 / FGSC 9075 / NRRL 31084 / PH-1</strain>
    </source>
</reference>
<reference key="4">
    <citation type="submission" date="2017-01" db="UniProtKB">
        <authorList>
            <consortium name="EnsemblFungi"/>
        </authorList>
    </citation>
    <scope>IDENTIFICATION</scope>
    <source>
        <strain>ATCC MYA-4620 / CBS 123657 / FGSC 9075 / NRRL 31084 / PH-1</strain>
    </source>
</reference>
<reference key="5">
    <citation type="journal article" date="2012" name="Plant Cell">
        <title>In planta stage-specific fungal gene profiling elucidates the molecular strategies of Fusarium graminearum growing inside wheat coleoptiles.</title>
        <authorList>
            <person name="Zhang X.W."/>
            <person name="Jia L.J."/>
            <person name="Zhang Y."/>
            <person name="Jiang G."/>
            <person name="Li X."/>
            <person name="Zhang D."/>
            <person name="Tang W.H."/>
        </authorList>
    </citation>
    <scope>INDUCTION</scope>
    <scope>DISRUPTION PHENOTYPE</scope>
</reference>
<reference key="6">
    <citation type="journal article" date="2013" name="PLoS ONE">
        <title>Identification of ABC transporter genes of Fusarium graminearum with roles in azole tolerance and/or virulence.</title>
        <authorList>
            <person name="Abou Ammar G."/>
            <person name="Tryono R."/>
            <person name="Doell K."/>
            <person name="Karlovsky P."/>
            <person name="Deising H.B."/>
            <person name="Wirsel S.G."/>
        </authorList>
    </citation>
    <scope>FUNCTION</scope>
</reference>
<reference key="7">
    <citation type="journal article" date="2014" name="PLoS ONE">
        <title>The Fusarium graminearum genome reveals more secondary metabolite gene clusters and hints of horizontal gene transfer.</title>
        <authorList>
            <person name="Sieber C.M."/>
            <person name="Lee W."/>
            <person name="Wong P."/>
            <person name="Muensterkoetter M."/>
            <person name="Mewes H.W."/>
            <person name="Schmeitzl C."/>
            <person name="Varga E."/>
            <person name="Berthiller F."/>
            <person name="Adam G."/>
            <person name="Gueldener U."/>
        </authorList>
    </citation>
    <scope>IDENTIFICATION</scope>
    <scope>INDUCTION</scope>
</reference>
<reference key="8">
    <citation type="journal article" date="2019" name="Nat. Commun.">
        <title>A linear nonribosomal octapeptide from Fusarium graminearum facilitates cell-to-cell invasion of wheat.</title>
        <authorList>
            <person name="Jia L.J."/>
            <person name="Tang H.Y."/>
            <person name="Wang W.Q."/>
            <person name="Yuan T.L."/>
            <person name="Wei W.Q."/>
            <person name="Pang B."/>
            <person name="Gong X.M."/>
            <person name="Wang S.F."/>
            <person name="Li Y.J."/>
            <person name="Zhang D."/>
            <person name="Liu W."/>
            <person name="Tang W.H."/>
        </authorList>
    </citation>
    <scope>FUNCTION</scope>
    <scope>DISRUPTION PHENOTYPE</scope>
</reference>
<reference key="9">
    <citation type="journal article" date="2019" name="Toxins">
        <title>Fusaoctaxin A, an example of a two-step mechanism for non-ribosomal peptide assembly and maturation in fungi.</title>
        <authorList>
            <person name="Westphal K.R."/>
            <person name="Nielsen K.A.H."/>
            <person name="Wollenberg R.D."/>
            <person name="Moellehoej M.B."/>
            <person name="Bachleitner S."/>
            <person name="Studt L."/>
            <person name="Lysoee E."/>
            <person name="Giese H."/>
            <person name="Wimmer R."/>
            <person name="Soerensen J.L."/>
            <person name="Sondergaard T.E."/>
        </authorList>
    </citation>
    <scope>FUNCTION</scope>
    <scope>DISRUPTION PHENOTYPE</scope>
    <scope>CATALYTIC ACTIVITY</scope>
    <scope>PATHWAY</scope>
</reference>